<feature type="chain" id="PRO_1000096130" description="Elongation factor P">
    <location>
        <begin position="1"/>
        <end position="185"/>
    </location>
</feature>
<proteinExistence type="inferred from homology"/>
<protein>
    <recommendedName>
        <fullName evidence="1">Elongation factor P</fullName>
        <shortName evidence="1">EF-P</shortName>
    </recommendedName>
</protein>
<reference key="1">
    <citation type="submission" date="2007-10" db="EMBL/GenBank/DDBJ databases">
        <title>Complete sequence of chromosome 1 of Burkholderia multivorans ATCC 17616.</title>
        <authorList>
            <person name="Copeland A."/>
            <person name="Lucas S."/>
            <person name="Lapidus A."/>
            <person name="Barry K."/>
            <person name="Glavina del Rio T."/>
            <person name="Dalin E."/>
            <person name="Tice H."/>
            <person name="Pitluck S."/>
            <person name="Chain P."/>
            <person name="Malfatti S."/>
            <person name="Shin M."/>
            <person name="Vergez L."/>
            <person name="Schmutz J."/>
            <person name="Larimer F."/>
            <person name="Land M."/>
            <person name="Hauser L."/>
            <person name="Kyrpides N."/>
            <person name="Kim E."/>
            <person name="Tiedje J."/>
            <person name="Richardson P."/>
        </authorList>
    </citation>
    <scope>NUCLEOTIDE SEQUENCE [LARGE SCALE GENOMIC DNA]</scope>
    <source>
        <strain>ATCC 17616 / 249</strain>
    </source>
</reference>
<reference key="2">
    <citation type="submission" date="2007-04" db="EMBL/GenBank/DDBJ databases">
        <title>Complete genome sequence of Burkholderia multivorans ATCC 17616.</title>
        <authorList>
            <person name="Ohtsubo Y."/>
            <person name="Yamashita A."/>
            <person name="Kurokawa K."/>
            <person name="Takami H."/>
            <person name="Yuhara S."/>
            <person name="Nishiyama E."/>
            <person name="Endo R."/>
            <person name="Miyazaki R."/>
            <person name="Ono A."/>
            <person name="Yano K."/>
            <person name="Ito M."/>
            <person name="Sota M."/>
            <person name="Yuji N."/>
            <person name="Hattori M."/>
            <person name="Tsuda M."/>
        </authorList>
    </citation>
    <scope>NUCLEOTIDE SEQUENCE [LARGE SCALE GENOMIC DNA]</scope>
    <source>
        <strain>ATCC 17616 / 249</strain>
    </source>
</reference>
<accession>A9ADD1</accession>
<sequence>MKTAQELRVGNVVQIGSDAWVISKTEYNKSGRNAAVVKLKMKNLLTNAGQESVYKADDKFDVVMLDRKEVTYSYFADPMYVFMDADYNQYEVEAEMMGDALNYLEDGMACEVVFYNEKAISVELPTILVREITYTEPAVKGDTSSGKVLKNAKLATGFELQVPLFCNTGDKIEIDTRTHEYRSRA</sequence>
<keyword id="KW-0963">Cytoplasm</keyword>
<keyword id="KW-0251">Elongation factor</keyword>
<keyword id="KW-0648">Protein biosynthesis</keyword>
<keyword id="KW-1185">Reference proteome</keyword>
<name>EFP_BURM1</name>
<dbReference type="EMBL" id="CP000868">
    <property type="protein sequence ID" value="ABX15848.1"/>
    <property type="molecule type" value="Genomic_DNA"/>
</dbReference>
<dbReference type="EMBL" id="AP009385">
    <property type="protein sequence ID" value="BAG43022.1"/>
    <property type="molecule type" value="Genomic_DNA"/>
</dbReference>
<dbReference type="RefSeq" id="WP_012213786.1">
    <property type="nucleotide sequence ID" value="NC_010084.1"/>
</dbReference>
<dbReference type="SMR" id="A9ADD1"/>
<dbReference type="STRING" id="395019.BMULJ_01078"/>
<dbReference type="KEGG" id="bmj:BMULJ_01078"/>
<dbReference type="KEGG" id="bmu:Bmul_2163"/>
<dbReference type="eggNOG" id="COG0231">
    <property type="taxonomic scope" value="Bacteria"/>
</dbReference>
<dbReference type="HOGENOM" id="CLU_074944_2_1_4"/>
<dbReference type="UniPathway" id="UPA00345"/>
<dbReference type="Proteomes" id="UP000008815">
    <property type="component" value="Chromosome 1"/>
</dbReference>
<dbReference type="GO" id="GO:0005737">
    <property type="term" value="C:cytoplasm"/>
    <property type="evidence" value="ECO:0007669"/>
    <property type="project" value="UniProtKB-SubCell"/>
</dbReference>
<dbReference type="GO" id="GO:0003746">
    <property type="term" value="F:translation elongation factor activity"/>
    <property type="evidence" value="ECO:0007669"/>
    <property type="project" value="UniProtKB-UniRule"/>
</dbReference>
<dbReference type="GO" id="GO:0043043">
    <property type="term" value="P:peptide biosynthetic process"/>
    <property type="evidence" value="ECO:0007669"/>
    <property type="project" value="InterPro"/>
</dbReference>
<dbReference type="CDD" id="cd04470">
    <property type="entry name" value="S1_EF-P_repeat_1"/>
    <property type="match status" value="1"/>
</dbReference>
<dbReference type="CDD" id="cd05794">
    <property type="entry name" value="S1_EF-P_repeat_2"/>
    <property type="match status" value="1"/>
</dbReference>
<dbReference type="FunFam" id="2.30.30.30:FF:000003">
    <property type="entry name" value="Elongation factor P"/>
    <property type="match status" value="1"/>
</dbReference>
<dbReference type="FunFam" id="2.40.50.140:FF:000004">
    <property type="entry name" value="Elongation factor P"/>
    <property type="match status" value="1"/>
</dbReference>
<dbReference type="FunFam" id="2.40.50.140:FF:000009">
    <property type="entry name" value="Elongation factor P"/>
    <property type="match status" value="1"/>
</dbReference>
<dbReference type="Gene3D" id="2.30.30.30">
    <property type="match status" value="1"/>
</dbReference>
<dbReference type="Gene3D" id="2.40.50.140">
    <property type="entry name" value="Nucleic acid-binding proteins"/>
    <property type="match status" value="2"/>
</dbReference>
<dbReference type="HAMAP" id="MF_00141">
    <property type="entry name" value="EF_P"/>
    <property type="match status" value="1"/>
</dbReference>
<dbReference type="InterPro" id="IPR015365">
    <property type="entry name" value="Elong-fact-P_C"/>
</dbReference>
<dbReference type="InterPro" id="IPR012340">
    <property type="entry name" value="NA-bd_OB-fold"/>
</dbReference>
<dbReference type="InterPro" id="IPR014722">
    <property type="entry name" value="Rib_uL2_dom2"/>
</dbReference>
<dbReference type="InterPro" id="IPR020599">
    <property type="entry name" value="Transl_elong_fac_P/YeiP"/>
</dbReference>
<dbReference type="InterPro" id="IPR013185">
    <property type="entry name" value="Transl_elong_KOW-like"/>
</dbReference>
<dbReference type="InterPro" id="IPR001059">
    <property type="entry name" value="Transl_elong_P/YeiP_cen"/>
</dbReference>
<dbReference type="InterPro" id="IPR013852">
    <property type="entry name" value="Transl_elong_P/YeiP_CS"/>
</dbReference>
<dbReference type="InterPro" id="IPR011768">
    <property type="entry name" value="Transl_elongation_fac_P"/>
</dbReference>
<dbReference type="InterPro" id="IPR008991">
    <property type="entry name" value="Translation_prot_SH3-like_sf"/>
</dbReference>
<dbReference type="NCBIfam" id="TIGR00038">
    <property type="entry name" value="efp"/>
    <property type="match status" value="1"/>
</dbReference>
<dbReference type="NCBIfam" id="NF001810">
    <property type="entry name" value="PRK00529.1"/>
    <property type="match status" value="1"/>
</dbReference>
<dbReference type="PANTHER" id="PTHR30053">
    <property type="entry name" value="ELONGATION FACTOR P"/>
    <property type="match status" value="1"/>
</dbReference>
<dbReference type="PANTHER" id="PTHR30053:SF12">
    <property type="entry name" value="ELONGATION FACTOR P (EF-P) FAMILY PROTEIN"/>
    <property type="match status" value="1"/>
</dbReference>
<dbReference type="Pfam" id="PF01132">
    <property type="entry name" value="EFP"/>
    <property type="match status" value="1"/>
</dbReference>
<dbReference type="Pfam" id="PF08207">
    <property type="entry name" value="EFP_N"/>
    <property type="match status" value="1"/>
</dbReference>
<dbReference type="Pfam" id="PF09285">
    <property type="entry name" value="Elong-fact-P_C"/>
    <property type="match status" value="1"/>
</dbReference>
<dbReference type="PIRSF" id="PIRSF005901">
    <property type="entry name" value="EF-P"/>
    <property type="match status" value="1"/>
</dbReference>
<dbReference type="SMART" id="SM01185">
    <property type="entry name" value="EFP"/>
    <property type="match status" value="1"/>
</dbReference>
<dbReference type="SMART" id="SM00841">
    <property type="entry name" value="Elong-fact-P_C"/>
    <property type="match status" value="1"/>
</dbReference>
<dbReference type="SUPFAM" id="SSF50249">
    <property type="entry name" value="Nucleic acid-binding proteins"/>
    <property type="match status" value="2"/>
</dbReference>
<dbReference type="SUPFAM" id="SSF50104">
    <property type="entry name" value="Translation proteins SH3-like domain"/>
    <property type="match status" value="1"/>
</dbReference>
<dbReference type="PROSITE" id="PS01275">
    <property type="entry name" value="EFP"/>
    <property type="match status" value="1"/>
</dbReference>
<evidence type="ECO:0000255" key="1">
    <source>
        <dbReference type="HAMAP-Rule" id="MF_00141"/>
    </source>
</evidence>
<organism>
    <name type="scientific">Burkholderia multivorans (strain ATCC 17616 / 249)</name>
    <dbReference type="NCBI Taxonomy" id="395019"/>
    <lineage>
        <taxon>Bacteria</taxon>
        <taxon>Pseudomonadati</taxon>
        <taxon>Pseudomonadota</taxon>
        <taxon>Betaproteobacteria</taxon>
        <taxon>Burkholderiales</taxon>
        <taxon>Burkholderiaceae</taxon>
        <taxon>Burkholderia</taxon>
        <taxon>Burkholderia cepacia complex</taxon>
    </lineage>
</organism>
<gene>
    <name evidence="1" type="primary">efp</name>
    <name type="ordered locus">Bmul_2163</name>
    <name type="ordered locus">BMULJ_01078</name>
</gene>
<comment type="function">
    <text evidence="1">Involved in peptide bond synthesis. Stimulates efficient translation and peptide-bond synthesis on native or reconstituted 70S ribosomes in vitro. Probably functions indirectly by altering the affinity of the ribosome for aminoacyl-tRNA, thus increasing their reactivity as acceptors for peptidyl transferase.</text>
</comment>
<comment type="pathway">
    <text evidence="1">Protein biosynthesis; polypeptide chain elongation.</text>
</comment>
<comment type="subcellular location">
    <subcellularLocation>
        <location evidence="1">Cytoplasm</location>
    </subcellularLocation>
</comment>
<comment type="similarity">
    <text evidence="1">Belongs to the elongation factor P family.</text>
</comment>